<organism>
    <name type="scientific">Arabidopsis thaliana</name>
    <name type="common">Mouse-ear cress</name>
    <dbReference type="NCBI Taxonomy" id="3702"/>
    <lineage>
        <taxon>Eukaryota</taxon>
        <taxon>Viridiplantae</taxon>
        <taxon>Streptophyta</taxon>
        <taxon>Embryophyta</taxon>
        <taxon>Tracheophyta</taxon>
        <taxon>Spermatophyta</taxon>
        <taxon>Magnoliopsida</taxon>
        <taxon>eudicotyledons</taxon>
        <taxon>Gunneridae</taxon>
        <taxon>Pentapetalae</taxon>
        <taxon>rosids</taxon>
        <taxon>malvids</taxon>
        <taxon>Brassicales</taxon>
        <taxon>Brassicaceae</taxon>
        <taxon>Camelineae</taxon>
        <taxon>Arabidopsis</taxon>
    </lineage>
</organism>
<sequence>MAPKNSSWNPFDDEKEAAKSFSLNPFDDDDDDKEVEKRFTSSLKPSGGKENQTVQELESYAVYNSEETTKTVQGCLKVAEEIRCDASKTLVMLNEQGDQITRTHQKTVDLDHHLSRGEKILGRLGGVFSRTWKPKKSRSITGPVITKGDSPKRKVIDLKTREKLGLNPSLKPKSKTLPEAVDAYQKTQIAKQDEALTDLSALLGELKNMAVDMGTAIERQTNELDHLQDNADELNYRVKQSNQRARYLLRK</sequence>
<reference key="1">
    <citation type="journal article" date="1997" name="DNA Res.">
        <title>Structural analysis of Arabidopsis thaliana chromosome 5. I. Sequence features of the 1.6 Mb regions covered by twenty physically assigned P1 clones.</title>
        <authorList>
            <person name="Sato S."/>
            <person name="Kotani H."/>
            <person name="Nakamura Y."/>
            <person name="Kaneko T."/>
            <person name="Asamizu E."/>
            <person name="Fukami M."/>
            <person name="Miyajima N."/>
            <person name="Tabata S."/>
        </authorList>
    </citation>
    <scope>NUCLEOTIDE SEQUENCE [LARGE SCALE GENOMIC DNA]</scope>
    <source>
        <strain>cv. Columbia</strain>
    </source>
</reference>
<reference key="2">
    <citation type="journal article" date="2000" name="Nature">
        <title>Sequence and analysis of chromosome 5 of the plant Arabidopsis thaliana.</title>
        <authorList>
            <person name="Tabata S."/>
            <person name="Kaneko T."/>
            <person name="Nakamura Y."/>
            <person name="Kotani H."/>
            <person name="Kato T."/>
            <person name="Asamizu E."/>
            <person name="Miyajima N."/>
            <person name="Sasamoto S."/>
            <person name="Kimura T."/>
            <person name="Hosouchi T."/>
            <person name="Kawashima K."/>
            <person name="Kohara M."/>
            <person name="Matsumoto M."/>
            <person name="Matsuno A."/>
            <person name="Muraki A."/>
            <person name="Nakayama S."/>
            <person name="Nakazaki N."/>
            <person name="Naruo K."/>
            <person name="Okumura S."/>
            <person name="Shinpo S."/>
            <person name="Takeuchi C."/>
            <person name="Wada T."/>
            <person name="Watanabe A."/>
            <person name="Yamada M."/>
            <person name="Yasuda M."/>
            <person name="Sato S."/>
            <person name="de la Bastide M."/>
            <person name="Huang E."/>
            <person name="Spiegel L."/>
            <person name="Gnoj L."/>
            <person name="O'Shaughnessy A."/>
            <person name="Preston R."/>
            <person name="Habermann K."/>
            <person name="Murray J."/>
            <person name="Johnson D."/>
            <person name="Rohlfing T."/>
            <person name="Nelson J."/>
            <person name="Stoneking T."/>
            <person name="Pepin K."/>
            <person name="Spieth J."/>
            <person name="Sekhon M."/>
            <person name="Armstrong J."/>
            <person name="Becker M."/>
            <person name="Belter E."/>
            <person name="Cordum H."/>
            <person name="Cordes M."/>
            <person name="Courtney L."/>
            <person name="Courtney W."/>
            <person name="Dante M."/>
            <person name="Du H."/>
            <person name="Edwards J."/>
            <person name="Fryman J."/>
            <person name="Haakensen B."/>
            <person name="Lamar E."/>
            <person name="Latreille P."/>
            <person name="Leonard S."/>
            <person name="Meyer R."/>
            <person name="Mulvaney E."/>
            <person name="Ozersky P."/>
            <person name="Riley A."/>
            <person name="Strowmatt C."/>
            <person name="Wagner-McPherson C."/>
            <person name="Wollam A."/>
            <person name="Yoakum M."/>
            <person name="Bell M."/>
            <person name="Dedhia N."/>
            <person name="Parnell L."/>
            <person name="Shah R."/>
            <person name="Rodriguez M."/>
            <person name="Hoon See L."/>
            <person name="Vil D."/>
            <person name="Baker J."/>
            <person name="Kirchoff K."/>
            <person name="Toth K."/>
            <person name="King L."/>
            <person name="Bahret A."/>
            <person name="Miller B."/>
            <person name="Marra M.A."/>
            <person name="Martienssen R."/>
            <person name="McCombie W.R."/>
            <person name="Wilson R.K."/>
            <person name="Murphy G."/>
            <person name="Bancroft I."/>
            <person name="Volckaert G."/>
            <person name="Wambutt R."/>
            <person name="Duesterhoeft A."/>
            <person name="Stiekema W."/>
            <person name="Pohl T."/>
            <person name="Entian K.-D."/>
            <person name="Terryn N."/>
            <person name="Hartley N."/>
            <person name="Bent E."/>
            <person name="Johnson S."/>
            <person name="Langham S.-A."/>
            <person name="McCullagh B."/>
            <person name="Robben J."/>
            <person name="Grymonprez B."/>
            <person name="Zimmermann W."/>
            <person name="Ramsperger U."/>
            <person name="Wedler H."/>
            <person name="Balke K."/>
            <person name="Wedler E."/>
            <person name="Peters S."/>
            <person name="van Staveren M."/>
            <person name="Dirkse W."/>
            <person name="Mooijman P."/>
            <person name="Klein Lankhorst R."/>
            <person name="Weitzenegger T."/>
            <person name="Bothe G."/>
            <person name="Rose M."/>
            <person name="Hauf J."/>
            <person name="Berneiser S."/>
            <person name="Hempel S."/>
            <person name="Feldpausch M."/>
            <person name="Lamberth S."/>
            <person name="Villarroel R."/>
            <person name="Gielen J."/>
            <person name="Ardiles W."/>
            <person name="Bents O."/>
            <person name="Lemcke K."/>
            <person name="Kolesov G."/>
            <person name="Mayer K.F.X."/>
            <person name="Rudd S."/>
            <person name="Schoof H."/>
            <person name="Schueller C."/>
            <person name="Zaccaria P."/>
            <person name="Mewes H.-W."/>
            <person name="Bevan M."/>
            <person name="Fransz P.F."/>
        </authorList>
    </citation>
    <scope>NUCLEOTIDE SEQUENCE [LARGE SCALE GENOMIC DNA]</scope>
    <source>
        <strain>cv. Columbia</strain>
    </source>
</reference>
<reference key="3">
    <citation type="journal article" date="2017" name="Plant J.">
        <title>Araport11: a complete reannotation of the Arabidopsis thaliana reference genome.</title>
        <authorList>
            <person name="Cheng C.Y."/>
            <person name="Krishnakumar V."/>
            <person name="Chan A.P."/>
            <person name="Thibaud-Nissen F."/>
            <person name="Schobel S."/>
            <person name="Town C.D."/>
        </authorList>
    </citation>
    <scope>GENOME REANNOTATION</scope>
    <source>
        <strain>cv. Columbia</strain>
    </source>
</reference>
<reference key="4">
    <citation type="submission" date="2005-05" db="EMBL/GenBank/DDBJ databases">
        <authorList>
            <person name="Underwood B.A."/>
            <person name="Xiao Y.-L."/>
            <person name="Moskal W.A. Jr."/>
            <person name="Monaghan E.L."/>
            <person name="Wang W."/>
            <person name="Redman J.C."/>
            <person name="Wu H.C."/>
            <person name="Utterback T."/>
            <person name="Town C.D."/>
        </authorList>
    </citation>
    <scope>NUCLEOTIDE SEQUENCE [LARGE SCALE MRNA]</scope>
    <source>
        <strain>cv. Columbia</strain>
    </source>
</reference>
<keyword id="KW-0175">Coiled coil</keyword>
<keyword id="KW-0963">Cytoplasm</keyword>
<keyword id="KW-0472">Membrane</keyword>
<keyword id="KW-0653">Protein transport</keyword>
<keyword id="KW-1185">Reference proteome</keyword>
<keyword id="KW-0813">Transport</keyword>
<name>SNP29_ARATH</name>
<comment type="function">
    <text evidence="2">SNAREs, soluble N-ethylmaleimide-sensitive factor-attachment protein receptors, are essential proteins for fusion of cellular membranes. SNAREs localized on opposing membranes assemble to form a trans-SNARE complex, an extended, parallel four alpha-helical bundle that drives membrane fusion.</text>
</comment>
<comment type="subcellular location">
    <subcellularLocation>
        <location evidence="1">Membrane</location>
        <topology evidence="1">Peripheral membrane protein</topology>
        <orientation evidence="1">Cytoplasmic side</orientation>
    </subcellularLocation>
    <subcellularLocation>
        <location evidence="1">Cytoplasm</location>
    </subcellularLocation>
</comment>
<comment type="similarity">
    <text evidence="5">Belongs to the SNAP-25 family.</text>
</comment>
<feature type="chain" id="PRO_0000213605" description="SNAP25 homologous protein SNAP29">
    <location>
        <begin position="1"/>
        <end position="251"/>
    </location>
</feature>
<feature type="domain" description="t-SNARE coiled-coil homology" evidence="3">
    <location>
        <begin position="186"/>
        <end position="248"/>
    </location>
</feature>
<feature type="region of interest" description="Disordered" evidence="4">
    <location>
        <begin position="1"/>
        <end position="52"/>
    </location>
</feature>
<feature type="compositionally biased region" description="Polar residues" evidence="4">
    <location>
        <begin position="40"/>
        <end position="52"/>
    </location>
</feature>
<accession>Q9SD96</accession>
<accession>Q4PSG3</accession>
<gene>
    <name type="primary">SNAP29</name>
    <name type="ordered locus">At5g07880</name>
    <name type="ORF">F13G24.80</name>
    <name type="ORF">MXM12.11</name>
</gene>
<evidence type="ECO:0000250" key="1"/>
<evidence type="ECO:0000250" key="2">
    <source>
        <dbReference type="UniProtKB" id="O95721"/>
    </source>
</evidence>
<evidence type="ECO:0000255" key="3">
    <source>
        <dbReference type="PROSITE-ProRule" id="PRU00202"/>
    </source>
</evidence>
<evidence type="ECO:0000256" key="4">
    <source>
        <dbReference type="SAM" id="MobiDB-lite"/>
    </source>
</evidence>
<evidence type="ECO:0000305" key="5"/>
<dbReference type="EMBL" id="AB005249">
    <property type="protein sequence ID" value="BAB09952.1"/>
    <property type="molecule type" value="Genomic_DNA"/>
</dbReference>
<dbReference type="EMBL" id="AL133421">
    <property type="protein sequence ID" value="CAB62600.1"/>
    <property type="molecule type" value="Genomic_DNA"/>
</dbReference>
<dbReference type="EMBL" id="CP002688">
    <property type="protein sequence ID" value="AED91215.1"/>
    <property type="molecule type" value="Genomic_DNA"/>
</dbReference>
<dbReference type="EMBL" id="CP002688">
    <property type="protein sequence ID" value="ANM69266.1"/>
    <property type="molecule type" value="Genomic_DNA"/>
</dbReference>
<dbReference type="EMBL" id="DQ056673">
    <property type="protein sequence ID" value="AAY78819.1"/>
    <property type="molecule type" value="mRNA"/>
</dbReference>
<dbReference type="PIR" id="T45613">
    <property type="entry name" value="T45613"/>
</dbReference>
<dbReference type="RefSeq" id="NP_001318503.1">
    <property type="nucleotide sequence ID" value="NM_001342964.1"/>
</dbReference>
<dbReference type="RefSeq" id="NP_196405.1">
    <property type="nucleotide sequence ID" value="NM_120870.2"/>
</dbReference>
<dbReference type="SMR" id="Q9SD96"/>
<dbReference type="BioGRID" id="15959">
    <property type="interactions" value="1"/>
</dbReference>
<dbReference type="FunCoup" id="Q9SD96">
    <property type="interactions" value="590"/>
</dbReference>
<dbReference type="IntAct" id="Q9SD96">
    <property type="interactions" value="1"/>
</dbReference>
<dbReference type="STRING" id="3702.Q9SD96"/>
<dbReference type="PaxDb" id="3702-AT5G07880.1"/>
<dbReference type="EnsemblPlants" id="AT5G07880.1">
    <property type="protein sequence ID" value="AT5G07880.1"/>
    <property type="gene ID" value="AT5G07880"/>
</dbReference>
<dbReference type="EnsemblPlants" id="AT5G07880.2">
    <property type="protein sequence ID" value="AT5G07880.2"/>
    <property type="gene ID" value="AT5G07880"/>
</dbReference>
<dbReference type="GeneID" id="830681"/>
<dbReference type="Gramene" id="AT5G07880.1">
    <property type="protein sequence ID" value="AT5G07880.1"/>
    <property type="gene ID" value="AT5G07880"/>
</dbReference>
<dbReference type="Gramene" id="AT5G07880.2">
    <property type="protein sequence ID" value="AT5G07880.2"/>
    <property type="gene ID" value="AT5G07880"/>
</dbReference>
<dbReference type="KEGG" id="ath:AT5G07880"/>
<dbReference type="Araport" id="AT5G07880"/>
<dbReference type="TAIR" id="AT5G07880">
    <property type="gene designation" value="SNAP29"/>
</dbReference>
<dbReference type="eggNOG" id="KOG3065">
    <property type="taxonomic scope" value="Eukaryota"/>
</dbReference>
<dbReference type="HOGENOM" id="CLU_061058_0_0_1"/>
<dbReference type="InParanoid" id="Q9SD96"/>
<dbReference type="OMA" id="INADMHE"/>
<dbReference type="PhylomeDB" id="Q9SD96"/>
<dbReference type="PRO" id="PR:Q9SD96"/>
<dbReference type="Proteomes" id="UP000006548">
    <property type="component" value="Chromosome 5"/>
</dbReference>
<dbReference type="ExpressionAtlas" id="Q9SD96">
    <property type="expression patterns" value="baseline and differential"/>
</dbReference>
<dbReference type="GO" id="GO:0031201">
    <property type="term" value="C:SNARE complex"/>
    <property type="evidence" value="ECO:0007669"/>
    <property type="project" value="InterPro"/>
</dbReference>
<dbReference type="GO" id="GO:0005484">
    <property type="term" value="F:SNAP receptor activity"/>
    <property type="evidence" value="ECO:0000250"/>
    <property type="project" value="TAIR"/>
</dbReference>
<dbReference type="GO" id="GO:0061025">
    <property type="term" value="P:membrane fusion"/>
    <property type="evidence" value="ECO:0000304"/>
    <property type="project" value="TAIR"/>
</dbReference>
<dbReference type="GO" id="GO:0015031">
    <property type="term" value="P:protein transport"/>
    <property type="evidence" value="ECO:0007669"/>
    <property type="project" value="UniProtKB-KW"/>
</dbReference>
<dbReference type="GO" id="GO:0016192">
    <property type="term" value="P:vesicle-mediated transport"/>
    <property type="evidence" value="ECO:0000304"/>
    <property type="project" value="TAIR"/>
</dbReference>
<dbReference type="CDD" id="cd15861">
    <property type="entry name" value="SNARE_SNAP25N_23N_29N_SEC9N"/>
    <property type="match status" value="1"/>
</dbReference>
<dbReference type="FunFam" id="1.20.5.110:FF:000031">
    <property type="entry name" value="SNAP25 homologous protein SNAP33"/>
    <property type="match status" value="1"/>
</dbReference>
<dbReference type="Gene3D" id="1.20.5.110">
    <property type="match status" value="2"/>
</dbReference>
<dbReference type="InterPro" id="IPR044766">
    <property type="entry name" value="NPSN/SNAP25-like_N_SNARE"/>
</dbReference>
<dbReference type="InterPro" id="IPR000727">
    <property type="entry name" value="T_SNARE_dom"/>
</dbReference>
<dbReference type="PANTHER" id="PTHR19305:SF24">
    <property type="entry name" value="SNAP25 HOMOLOGOUS PROTEIN SNAP29"/>
    <property type="match status" value="1"/>
</dbReference>
<dbReference type="PANTHER" id="PTHR19305">
    <property type="entry name" value="SYNAPTOSOMAL ASSOCIATED PROTEIN"/>
    <property type="match status" value="1"/>
</dbReference>
<dbReference type="SMART" id="SM00397">
    <property type="entry name" value="t_SNARE"/>
    <property type="match status" value="2"/>
</dbReference>
<dbReference type="SUPFAM" id="SSF58038">
    <property type="entry name" value="SNARE fusion complex"/>
    <property type="match status" value="2"/>
</dbReference>
<dbReference type="PROSITE" id="PS50192">
    <property type="entry name" value="T_SNARE"/>
    <property type="match status" value="1"/>
</dbReference>
<proteinExistence type="evidence at transcript level"/>
<protein>
    <recommendedName>
        <fullName>SNAP25 homologous protein SNAP29</fullName>
        <shortName>AtSNAP29</shortName>
    </recommendedName>
    <alternativeName>
        <fullName>Synaptosomal-associated protein SNAP25-like 2</fullName>
    </alternativeName>
</protein>